<feature type="chain" id="PRO_0000366727" description="Ribosomal RNA large subunit methyltransferase K/L">
    <location>
        <begin position="1"/>
        <end position="699"/>
    </location>
</feature>
<feature type="domain" description="THUMP" evidence="1">
    <location>
        <begin position="44"/>
        <end position="155"/>
    </location>
</feature>
<name>RLMKL_ALTMD</name>
<proteinExistence type="inferred from homology"/>
<sequence length="699" mass="78010">MNTILVTTSRGLDELLKQEVLTLCPDAQIKQGPGTIQFEGSKEDAYKLCLWSRLANRVIWVLASGKAGDAEALYNTAMGIDWQMQMDSRHTLSVQFIGTNFAIKNTQFGAVRVKDAIVDSFVEQGLPRPSVERKTPDISVYARLHRDNVILGIDLAGASLHQRAYRQETGDAPLKEHIASAMLMRSGWTENTDAPLVDLMCGSGTIAIEAAYIARNIAPGIKRSYWGFTKWLGHEATLWDSLLEDAISVQKPSCGGGIYAGDFSRKMVAIAKANADFAGVFNDISFSQQDATKSSPPVATPGYVVSNPPYGERLGELTSLIPLFSDWGKRFKEAWKGWHVSLLSSNRDLLRVLKLRATKDYAMNNGKLECRLANYVLDEQNTVQFSEDAGNHEFANRLKKNLKRMKGWVKSANTNCYRIYDADLPDYNVAVDRYGDWLVVQEYAPPKTVSEDKARKRLQEVLLHLPAVTGVSPKNIALKVRAQQKGSKQYEKINQSGEMMEVFENGARFLVNLTDYLDTGLFLDHRNTRQKVKALSQGKDVLNLFSYTGSVSVFAAMGGAKSVTTVDMSNTYLDWAKKNVALNKLSGPHAFIQADCTTWLGTHKGKYDLIFIDPPSFSNSKRMQNTWDVQRDHVKMLTDAKACLKEQGTIIFSNNKRGFKLDETAVTALGLQVENITKETIPEDFARKGKIHQCWVLRS</sequence>
<accession>B4RZ48</accession>
<accession>F2G293</accession>
<organism>
    <name type="scientific">Alteromonas mediterranea (strain DSM 17117 / CIP 110805 / LMG 28347 / Deep ecotype)</name>
    <dbReference type="NCBI Taxonomy" id="1774373"/>
    <lineage>
        <taxon>Bacteria</taxon>
        <taxon>Pseudomonadati</taxon>
        <taxon>Pseudomonadota</taxon>
        <taxon>Gammaproteobacteria</taxon>
        <taxon>Alteromonadales</taxon>
        <taxon>Alteromonadaceae</taxon>
        <taxon>Alteromonas/Salinimonas group</taxon>
        <taxon>Alteromonas</taxon>
    </lineage>
</organism>
<dbReference type="EC" id="2.1.1.173" evidence="1"/>
<dbReference type="EC" id="2.1.1.264" evidence="1"/>
<dbReference type="EMBL" id="CP001103">
    <property type="protein sequence ID" value="AEA98173.1"/>
    <property type="molecule type" value="Genomic_DNA"/>
</dbReference>
<dbReference type="SMR" id="B4RZ48"/>
<dbReference type="KEGG" id="amc:MADE_1010175"/>
<dbReference type="HOGENOM" id="CLU_014042_2_0_6"/>
<dbReference type="Proteomes" id="UP000001870">
    <property type="component" value="Chromosome"/>
</dbReference>
<dbReference type="GO" id="GO:0005737">
    <property type="term" value="C:cytoplasm"/>
    <property type="evidence" value="ECO:0007669"/>
    <property type="project" value="UniProtKB-SubCell"/>
</dbReference>
<dbReference type="GO" id="GO:0052915">
    <property type="term" value="F:23S rRNA (guanine(2445)-N(2))-methyltransferase activity"/>
    <property type="evidence" value="ECO:0007669"/>
    <property type="project" value="UniProtKB-UniRule"/>
</dbReference>
<dbReference type="GO" id="GO:0003723">
    <property type="term" value="F:RNA binding"/>
    <property type="evidence" value="ECO:0007669"/>
    <property type="project" value="UniProtKB-KW"/>
</dbReference>
<dbReference type="GO" id="GO:0070043">
    <property type="term" value="F:rRNA (guanine-N7-)-methyltransferase activity"/>
    <property type="evidence" value="ECO:0007669"/>
    <property type="project" value="UniProtKB-UniRule"/>
</dbReference>
<dbReference type="CDD" id="cd02440">
    <property type="entry name" value="AdoMet_MTases"/>
    <property type="match status" value="1"/>
</dbReference>
<dbReference type="CDD" id="cd11715">
    <property type="entry name" value="THUMP_AdoMetMT"/>
    <property type="match status" value="1"/>
</dbReference>
<dbReference type="Gene3D" id="3.30.2130.30">
    <property type="match status" value="1"/>
</dbReference>
<dbReference type="Gene3D" id="3.30.750.80">
    <property type="entry name" value="RNA methyltransferase domain (HRMD) like"/>
    <property type="match status" value="1"/>
</dbReference>
<dbReference type="Gene3D" id="3.40.50.150">
    <property type="entry name" value="Vaccinia Virus protein VP39"/>
    <property type="match status" value="2"/>
</dbReference>
<dbReference type="HAMAP" id="MF_01858">
    <property type="entry name" value="23SrRNA_methyltr_KL"/>
    <property type="match status" value="1"/>
</dbReference>
<dbReference type="InterPro" id="IPR017244">
    <property type="entry name" value="23SrRNA_methyltr_KL"/>
</dbReference>
<dbReference type="InterPro" id="IPR002052">
    <property type="entry name" value="DNA_methylase_N6_adenine_CS"/>
</dbReference>
<dbReference type="InterPro" id="IPR000241">
    <property type="entry name" value="RlmKL-like_Mtase"/>
</dbReference>
<dbReference type="InterPro" id="IPR054170">
    <property type="entry name" value="RlmL_1st"/>
</dbReference>
<dbReference type="InterPro" id="IPR019614">
    <property type="entry name" value="SAM-dep_methyl-trfase"/>
</dbReference>
<dbReference type="InterPro" id="IPR029063">
    <property type="entry name" value="SAM-dependent_MTases_sf"/>
</dbReference>
<dbReference type="InterPro" id="IPR004114">
    <property type="entry name" value="THUMP_dom"/>
</dbReference>
<dbReference type="NCBIfam" id="NF008748">
    <property type="entry name" value="PRK11783.1"/>
    <property type="match status" value="1"/>
</dbReference>
<dbReference type="PANTHER" id="PTHR47313">
    <property type="entry name" value="RIBOSOMAL RNA LARGE SUBUNIT METHYLTRANSFERASE K/L"/>
    <property type="match status" value="1"/>
</dbReference>
<dbReference type="PANTHER" id="PTHR47313:SF1">
    <property type="entry name" value="RIBOSOMAL RNA LARGE SUBUNIT METHYLTRANSFERASE K_L"/>
    <property type="match status" value="1"/>
</dbReference>
<dbReference type="Pfam" id="PF10672">
    <property type="entry name" value="Methyltrans_SAM"/>
    <property type="match status" value="1"/>
</dbReference>
<dbReference type="Pfam" id="PF22020">
    <property type="entry name" value="RlmL_1st"/>
    <property type="match status" value="1"/>
</dbReference>
<dbReference type="Pfam" id="PF02926">
    <property type="entry name" value="THUMP"/>
    <property type="match status" value="1"/>
</dbReference>
<dbReference type="Pfam" id="PF01170">
    <property type="entry name" value="UPF0020"/>
    <property type="match status" value="1"/>
</dbReference>
<dbReference type="PIRSF" id="PIRSF037618">
    <property type="entry name" value="RNA_Mtase_bacteria_prd"/>
    <property type="match status" value="1"/>
</dbReference>
<dbReference type="SMART" id="SM00981">
    <property type="entry name" value="THUMP"/>
    <property type="match status" value="1"/>
</dbReference>
<dbReference type="SUPFAM" id="SSF53335">
    <property type="entry name" value="S-adenosyl-L-methionine-dependent methyltransferases"/>
    <property type="match status" value="2"/>
</dbReference>
<dbReference type="PROSITE" id="PS51165">
    <property type="entry name" value="THUMP"/>
    <property type="match status" value="1"/>
</dbReference>
<protein>
    <recommendedName>
        <fullName evidence="1">Ribosomal RNA large subunit methyltransferase K/L</fullName>
    </recommendedName>
    <domain>
        <recommendedName>
            <fullName evidence="1">23S rRNA m2G2445 methyltransferase</fullName>
            <ecNumber evidence="1">2.1.1.173</ecNumber>
        </recommendedName>
        <alternativeName>
            <fullName evidence="1">rRNA (guanine-N(2)-)-methyltransferase RlmL</fullName>
        </alternativeName>
    </domain>
    <domain>
        <recommendedName>
            <fullName evidence="1">23S rRNA m7G2069 methyltransferase</fullName>
            <ecNumber evidence="1">2.1.1.264</ecNumber>
        </recommendedName>
        <alternativeName>
            <fullName evidence="1">rRNA (guanine-N(7)-)-methyltransferase RlmK</fullName>
        </alternativeName>
    </domain>
</protein>
<gene>
    <name evidence="1" type="primary">rlmL</name>
    <name type="ordered locus">MADE_1010175</name>
</gene>
<reference key="1">
    <citation type="journal article" date="2008" name="ISME J.">
        <title>Comparative genomics of two ecotypes of the marine planktonic copiotroph Alteromonas macleodii suggests alternative lifestyles associated with different kinds of particulate organic matter.</title>
        <authorList>
            <person name="Ivars-Martinez E."/>
            <person name="Martin-Cuadrado A.-B."/>
            <person name="D'Auria G."/>
            <person name="Mira A."/>
            <person name="Ferriera S."/>
            <person name="Johnson J."/>
            <person name="Friedman R."/>
            <person name="Rodriguez-Valera F."/>
        </authorList>
    </citation>
    <scope>NUCLEOTIDE SEQUENCE [LARGE SCALE GENOMIC DNA]</scope>
    <source>
        <strain>DSM 17117 / CIP 110805 / LMG 28347 / Deep ecotype</strain>
    </source>
</reference>
<keyword id="KW-0963">Cytoplasm</keyword>
<keyword id="KW-0489">Methyltransferase</keyword>
<keyword id="KW-0694">RNA-binding</keyword>
<keyword id="KW-0698">rRNA processing</keyword>
<keyword id="KW-0949">S-adenosyl-L-methionine</keyword>
<keyword id="KW-0808">Transferase</keyword>
<comment type="function">
    <text evidence="1">Specifically methylates the guanine in position 2445 (m2G2445) and the guanine in position 2069 (m7G2069) of 23S rRNA.</text>
</comment>
<comment type="catalytic activity">
    <reaction evidence="1">
        <text>guanosine(2445) in 23S rRNA + S-adenosyl-L-methionine = N(2)-methylguanosine(2445) in 23S rRNA + S-adenosyl-L-homocysteine + H(+)</text>
        <dbReference type="Rhea" id="RHEA:42740"/>
        <dbReference type="Rhea" id="RHEA-COMP:10215"/>
        <dbReference type="Rhea" id="RHEA-COMP:10216"/>
        <dbReference type="ChEBI" id="CHEBI:15378"/>
        <dbReference type="ChEBI" id="CHEBI:57856"/>
        <dbReference type="ChEBI" id="CHEBI:59789"/>
        <dbReference type="ChEBI" id="CHEBI:74269"/>
        <dbReference type="ChEBI" id="CHEBI:74481"/>
        <dbReference type="EC" id="2.1.1.173"/>
    </reaction>
</comment>
<comment type="catalytic activity">
    <reaction evidence="1">
        <text>guanosine(2069) in 23S rRNA + S-adenosyl-L-methionine = N(2)-methylguanosine(2069) in 23S rRNA + S-adenosyl-L-homocysteine + H(+)</text>
        <dbReference type="Rhea" id="RHEA:43772"/>
        <dbReference type="Rhea" id="RHEA-COMP:10688"/>
        <dbReference type="Rhea" id="RHEA-COMP:10689"/>
        <dbReference type="ChEBI" id="CHEBI:15378"/>
        <dbReference type="ChEBI" id="CHEBI:57856"/>
        <dbReference type="ChEBI" id="CHEBI:59789"/>
        <dbReference type="ChEBI" id="CHEBI:74269"/>
        <dbReference type="ChEBI" id="CHEBI:74481"/>
        <dbReference type="EC" id="2.1.1.264"/>
    </reaction>
</comment>
<comment type="subcellular location">
    <subcellularLocation>
        <location evidence="1">Cytoplasm</location>
    </subcellularLocation>
</comment>
<comment type="similarity">
    <text evidence="1">Belongs to the methyltransferase superfamily. RlmKL family.</text>
</comment>
<evidence type="ECO:0000255" key="1">
    <source>
        <dbReference type="HAMAP-Rule" id="MF_01858"/>
    </source>
</evidence>